<feature type="chain" id="PRO_0000438796" description="Teichoic acid ribitol-phosphate polymerase TarL">
    <location>
        <begin position="1"/>
        <end position="562"/>
    </location>
</feature>
<accession>Q2G1B8</accession>
<protein>
    <recommendedName>
        <fullName evidence="5">Teichoic acid ribitol-phosphate polymerase TarL</fullName>
        <ecNumber evidence="1 2 3">2.7.8.14</ecNumber>
    </recommendedName>
    <alternativeName>
        <fullName evidence="5">Poly(ribitol phosphate) polymerase TarL</fullName>
    </alternativeName>
    <alternativeName>
        <fullName evidence="4">Ribitol-phosphate polymerase TarL</fullName>
    </alternativeName>
    <alternativeName>
        <fullName evidence="5">Tar polymerase TarL</fullName>
    </alternativeName>
</protein>
<dbReference type="EC" id="2.7.8.14" evidence="1 2 3"/>
<dbReference type="EMBL" id="CP000253">
    <property type="protein sequence ID" value="ABD29402.1"/>
    <property type="molecule type" value="Genomic_DNA"/>
</dbReference>
<dbReference type="RefSeq" id="WP_000240920.1">
    <property type="nucleotide sequence ID" value="NZ_LS483365.1"/>
</dbReference>
<dbReference type="RefSeq" id="YP_498822.1">
    <property type="nucleotide sequence ID" value="NC_007795.1"/>
</dbReference>
<dbReference type="PDB" id="8V33">
    <property type="method" value="X-ray"/>
    <property type="resolution" value="1.70 A"/>
    <property type="chains" value="A=1-169"/>
</dbReference>
<dbReference type="PDB" id="8VA1">
    <property type="method" value="EM"/>
    <property type="resolution" value="3.40 A"/>
    <property type="chains" value="A/B/C/D=1-562"/>
</dbReference>
<dbReference type="PDBsum" id="8V33"/>
<dbReference type="PDBsum" id="8VA1"/>
<dbReference type="EMDB" id="EMD-43083"/>
<dbReference type="EMDB" id="EMD-43084"/>
<dbReference type="SMR" id="Q2G1B8"/>
<dbReference type="STRING" id="93061.SAOUHSC_00227"/>
<dbReference type="PaxDb" id="1280-SAXN108_0237"/>
<dbReference type="GeneID" id="3920302"/>
<dbReference type="KEGG" id="sao:SAOUHSC_00227"/>
<dbReference type="PATRIC" id="fig|93061.5.peg.208"/>
<dbReference type="eggNOG" id="COG1887">
    <property type="taxonomic scope" value="Bacteria"/>
</dbReference>
<dbReference type="HOGENOM" id="CLU_029598_3_1_9"/>
<dbReference type="OrthoDB" id="9811865at2"/>
<dbReference type="BioCyc" id="MetaCyc:MONOMER-19978"/>
<dbReference type="BRENDA" id="2.7.8.47">
    <property type="organism ID" value="3352"/>
</dbReference>
<dbReference type="UniPathway" id="UPA00790"/>
<dbReference type="Proteomes" id="UP000008816">
    <property type="component" value="Chromosome"/>
</dbReference>
<dbReference type="GO" id="GO:0005886">
    <property type="term" value="C:plasma membrane"/>
    <property type="evidence" value="ECO:0007669"/>
    <property type="project" value="UniProtKB-SubCell"/>
</dbReference>
<dbReference type="GO" id="GO:0047355">
    <property type="term" value="F:CDP-glycerol glycerophosphotransferase activity"/>
    <property type="evidence" value="ECO:0007669"/>
    <property type="project" value="InterPro"/>
</dbReference>
<dbReference type="GO" id="GO:0047356">
    <property type="term" value="F:CDP-ribitol ribitolphosphotransferase activity"/>
    <property type="evidence" value="ECO:0007669"/>
    <property type="project" value="UniProtKB-EC"/>
</dbReference>
<dbReference type="GO" id="GO:0071555">
    <property type="term" value="P:cell wall organization"/>
    <property type="evidence" value="ECO:0007669"/>
    <property type="project" value="UniProtKB-KW"/>
</dbReference>
<dbReference type="GO" id="GO:0019350">
    <property type="term" value="P:teichoic acid biosynthetic process"/>
    <property type="evidence" value="ECO:0007669"/>
    <property type="project" value="UniProtKB-KW"/>
</dbReference>
<dbReference type="Gene3D" id="3.40.50.11820">
    <property type="match status" value="1"/>
</dbReference>
<dbReference type="Gene3D" id="3.40.50.12580">
    <property type="match status" value="1"/>
</dbReference>
<dbReference type="InterPro" id="IPR007554">
    <property type="entry name" value="Glycerophosphate_synth"/>
</dbReference>
<dbReference type="InterPro" id="IPR043148">
    <property type="entry name" value="TagF_C"/>
</dbReference>
<dbReference type="InterPro" id="IPR043149">
    <property type="entry name" value="TagF_N"/>
</dbReference>
<dbReference type="InterPro" id="IPR049702">
    <property type="entry name" value="TarL"/>
</dbReference>
<dbReference type="InterPro" id="IPR051612">
    <property type="entry name" value="Teichoic_Acid_Biosynth"/>
</dbReference>
<dbReference type="NCBIfam" id="NF041713">
    <property type="entry name" value="Tar_polymTarL"/>
    <property type="match status" value="1"/>
</dbReference>
<dbReference type="PANTHER" id="PTHR37316">
    <property type="entry name" value="TEICHOIC ACID GLYCEROL-PHOSPHATE PRIMASE"/>
    <property type="match status" value="1"/>
</dbReference>
<dbReference type="PANTHER" id="PTHR37316:SF2">
    <property type="entry name" value="TEICHOIC ACID RIBITOL-PHOSPHATE POLYMERASE TARK"/>
    <property type="match status" value="1"/>
</dbReference>
<dbReference type="Pfam" id="PF04464">
    <property type="entry name" value="Glyphos_transf"/>
    <property type="match status" value="1"/>
</dbReference>
<dbReference type="SUPFAM" id="SSF53756">
    <property type="entry name" value="UDP-Glycosyltransferase/glycogen phosphorylase"/>
    <property type="match status" value="1"/>
</dbReference>
<evidence type="ECO:0000269" key="1">
    <source>
    </source>
</evidence>
<evidence type="ECO:0000269" key="2">
    <source>
    </source>
</evidence>
<evidence type="ECO:0000269" key="3">
    <source>
    </source>
</evidence>
<evidence type="ECO:0000303" key="4">
    <source>
    </source>
</evidence>
<evidence type="ECO:0000305" key="5"/>
<evidence type="ECO:0000312" key="6">
    <source>
        <dbReference type="EMBL" id="ABD29402.1"/>
    </source>
</evidence>
<evidence type="ECO:0000312" key="7">
    <source>
        <dbReference type="Proteomes" id="UP000008816"/>
    </source>
</evidence>
<organism>
    <name type="scientific">Staphylococcus aureus (strain NCTC 8325 / PS 47)</name>
    <dbReference type="NCBI Taxonomy" id="93061"/>
    <lineage>
        <taxon>Bacteria</taxon>
        <taxon>Bacillati</taxon>
        <taxon>Bacillota</taxon>
        <taxon>Bacilli</taxon>
        <taxon>Bacillales</taxon>
        <taxon>Staphylococcaceae</taxon>
        <taxon>Staphylococcus</taxon>
    </lineage>
</organism>
<gene>
    <name type="primary">tarL</name>
    <name evidence="6" type="ordered locus">SAOUHSC_00227</name>
</gene>
<name>TARL_STAA8</name>
<comment type="function">
    <text evidence="1 2 3">Responsible for the polymerization of the main chain of the major teichoic acid by sequential transfer of ribitol phosphate units from CDP-ribitol to the second glycerol phosphate attached to the disaccharide linkage unit. Synthesizes polymers of more than 40 ribitol phosphate units in length.</text>
</comment>
<comment type="catalytic activity">
    <reaction evidence="1 2 3">
        <text>4-O-[di(2R)-glycerylphospho]-N-acetyl-beta-D-mannosaminyl-(1-&gt;4)-N-acetyl-alpha-D-glucosaminyl di-trans,octa-cis-undecaprenyl diphosphate + n CDP-L-ribitol = 4-O-[(D-ribitylphospho)(n)-di{(2R)-glycerylphospho}]-N-acetyl-beta-D-mannosaminyl-(1-&gt;4)-N-acetyl-alpha-D-glucosaminyl di-trans,octa-cis-undecaprenyl diphosphate + n CMP + n H(+)</text>
        <dbReference type="Rhea" id="RHEA:13353"/>
        <dbReference type="Rhea" id="RHEA-COMP:12840"/>
        <dbReference type="ChEBI" id="CHEBI:15378"/>
        <dbReference type="ChEBI" id="CHEBI:57608"/>
        <dbReference type="ChEBI" id="CHEBI:60377"/>
        <dbReference type="ChEBI" id="CHEBI:133867"/>
        <dbReference type="ChEBI" id="CHEBI:133896"/>
        <dbReference type="EC" id="2.7.8.14"/>
    </reaction>
</comment>
<comment type="pathway">
    <text evidence="1">Cell wall biogenesis; poly(ribitol phosphate) teichoic acid biosynthesis.</text>
</comment>
<comment type="subcellular location">
    <subcellularLocation>
        <location evidence="5">Cell membrane</location>
        <topology evidence="5">Peripheral membrane protein</topology>
    </subcellularLocation>
</comment>
<comment type="similarity">
    <text evidence="5">Belongs to the CDP-glycerol glycerophosphotransferase family.</text>
</comment>
<keyword id="KW-0002">3D-structure</keyword>
<keyword id="KW-1003">Cell membrane</keyword>
<keyword id="KW-0961">Cell wall biogenesis/degradation</keyword>
<keyword id="KW-0472">Membrane</keyword>
<keyword id="KW-1185">Reference proteome</keyword>
<keyword id="KW-0777">Teichoic acid biosynthesis</keyword>
<keyword id="KW-0808">Transferase</keyword>
<sequence>MVKSKIYIDKIYWERVQLFVEGHSENLDLEDSNFVLRNLTETRTMKANDVKIDGNQFVCRFNVAILDNGYYLPEDKYLLVNEQELDYIAQLNPDVINDAYQNLKPEQEEEYNELETQNGKINFLLQTYLKEFRKGGISKKTVYTVTPEISSDVNEFVLDVVVTTPEVKSIYIVRKYKELRKYFRKQSFNTRQFIFKAIFNTTKFFHLKKGNTVLFTSDSRPTMSGNFEYIYNEMLRQNLDKKYDIHTVFKANITDRRGIIDKFRLPYLLGKADYIFVDDFHPLIYTVRFRRSQEVIQVWHAVGAFKTVGFSRTGKKGGPFIDSLNHRSYTKAYVSSETDIPFYAEAFGIKEKNVVPTGVPRTDVLFDEAYATQIKQEMEDELPIIKGKKVILFAPTFRGSGHGTAHYPFFKIDFERLARYCEKNNAVVLFKMHPFVKNRLNIADKHKQYFVDVSDFREVNDILFITDLLISDYSSLIYEYAVFKKPMIFYAFDLEDYITTRDFYEPYESFVPGKIVQSFDALMDALDNEDYEGEKVIPFLDKHFKYQDGRSSERLVRNLFGS</sequence>
<proteinExistence type="evidence at protein level"/>
<reference key="1">
    <citation type="book" date="2006" name="Gram positive pathogens, 2nd edition">
        <title>The Staphylococcus aureus NCTC 8325 genome.</title>
        <editorList>
            <person name="Fischetti V."/>
            <person name="Novick R."/>
            <person name="Ferretti J."/>
            <person name="Portnoy D."/>
            <person name="Rood J."/>
        </editorList>
        <authorList>
            <person name="Gillaspy A.F."/>
            <person name="Worrell V."/>
            <person name="Orvis J."/>
            <person name="Roe B.A."/>
            <person name="Dyer D.W."/>
            <person name="Iandolo J.J."/>
        </authorList>
    </citation>
    <scope>NUCLEOTIDE SEQUENCE [LARGE SCALE GENOMIC DNA]</scope>
    <source>
        <strain evidence="7">NCTC 8325 / PS 47</strain>
    </source>
</reference>
<reference key="2">
    <citation type="journal article" date="2008" name="Chem. Biol.">
        <title>A revised pathway proposed for Staphylococcus aureus wall teichoic acid biosynthesis based on in vitro reconstitution of the intracellular steps.</title>
        <authorList>
            <person name="Brown S."/>
            <person name="Zhang Y.H."/>
            <person name="Walker S."/>
        </authorList>
    </citation>
    <scope>FUNCTION</scope>
    <scope>CATALYTIC ACTIVITY</scope>
    <scope>PATHWAY</scope>
    <source>
        <strain>NCTC 8325 / PS 47</strain>
    </source>
</reference>
<reference key="3">
    <citation type="journal article" date="2008" name="J. Bacteriol.">
        <title>Duplication of teichoic acid biosynthetic genes in Staphylococcus aureus leads to functionally redundant poly(ribitol phosphate) polymerases.</title>
        <authorList>
            <person name="Pereira M.P."/>
            <person name="D'Elia M.A."/>
            <person name="Troczynska J."/>
            <person name="Brown E.D."/>
        </authorList>
    </citation>
    <scope>FUNCTION</scope>
    <scope>CATALYTIC ACTIVITY</scope>
    <source>
        <strain>RN4220 / SA178RI</strain>
    </source>
</reference>
<reference key="4">
    <citation type="journal article" date="2010" name="Chem. Biol.">
        <title>Staphylococcus aureus and Bacillus subtilis W23 make polyribitol wall teichoic acids using different enzymatic pathways.</title>
        <authorList>
            <person name="Brown S."/>
            <person name="Meredith T."/>
            <person name="Swoboda J."/>
            <person name="Walker S."/>
        </authorList>
    </citation>
    <scope>FUNCTION</scope>
    <scope>CATALYTIC ACTIVITY</scope>
</reference>